<dbReference type="EMBL" id="AF026509">
    <property type="protein sequence ID" value="AAB94086.1"/>
    <property type="molecule type" value="mRNA"/>
</dbReference>
<dbReference type="EMBL" id="AK157958">
    <property type="protein sequence ID" value="BAE34283.1"/>
    <property type="molecule type" value="mRNA"/>
</dbReference>
<dbReference type="EMBL" id="AL603709">
    <property type="status" value="NOT_ANNOTATED_CDS"/>
    <property type="molecule type" value="Genomic_DNA"/>
</dbReference>
<dbReference type="EMBL" id="BX000996">
    <property type="status" value="NOT_ANNOTATED_CDS"/>
    <property type="molecule type" value="Genomic_DNA"/>
</dbReference>
<dbReference type="EMBL" id="CH466558">
    <property type="protein sequence ID" value="EDL34227.1"/>
    <property type="molecule type" value="Genomic_DNA"/>
</dbReference>
<dbReference type="EMBL" id="BC125518">
    <property type="protein sequence ID" value="AAI25519.1"/>
    <property type="molecule type" value="mRNA"/>
</dbReference>
<dbReference type="EMBL" id="BC125520">
    <property type="protein sequence ID" value="AAI25521.1"/>
    <property type="molecule type" value="mRNA"/>
</dbReference>
<dbReference type="CCDS" id="CCDS25536.1"/>
<dbReference type="PIR" id="PN0510">
    <property type="entry name" value="PN0510"/>
</dbReference>
<dbReference type="RefSeq" id="NP_058060.2">
    <property type="nucleotide sequence ID" value="NM_016780.2"/>
</dbReference>
<dbReference type="PDB" id="5XQ1">
    <property type="method" value="X-ray"/>
    <property type="resolution" value="2.95 A"/>
    <property type="chains" value="A/B=773-787"/>
</dbReference>
<dbReference type="PDB" id="6VGU">
    <property type="method" value="X-ray"/>
    <property type="resolution" value="2.78 A"/>
    <property type="chains" value="A=745-775"/>
</dbReference>
<dbReference type="PDBsum" id="5XQ1"/>
<dbReference type="PDBsum" id="6VGU"/>
<dbReference type="BMRB" id="O54890"/>
<dbReference type="SMR" id="O54890"/>
<dbReference type="BioGRID" id="200830">
    <property type="interactions" value="110"/>
</dbReference>
<dbReference type="ComplexPortal" id="CPX-3035">
    <property type="entry name" value="Integrin alphav-beta3 complex"/>
</dbReference>
<dbReference type="ComplexPortal" id="CPX-3116">
    <property type="entry name" value="Integrin alphaIIb-beta3 complex"/>
</dbReference>
<dbReference type="CORUM" id="O54890"/>
<dbReference type="DIP" id="DIP-46416N"/>
<dbReference type="FunCoup" id="O54890">
    <property type="interactions" value="1092"/>
</dbReference>
<dbReference type="IntAct" id="O54890">
    <property type="interactions" value="5"/>
</dbReference>
<dbReference type="STRING" id="10090.ENSMUSP00000021028"/>
<dbReference type="BindingDB" id="O54890"/>
<dbReference type="ChEMBL" id="CHEMBL3430891"/>
<dbReference type="ChEMBL" id="CHEMBL3430894"/>
<dbReference type="GlyConnect" id="2405">
    <property type="glycosylation" value="2 N-Linked glycans (1 site)"/>
</dbReference>
<dbReference type="GlyCosmos" id="O54890">
    <property type="glycosylation" value="5 sites, 2 glycans"/>
</dbReference>
<dbReference type="GlyGen" id="O54890">
    <property type="glycosylation" value="5 sites, 5 N-linked glycans (3 sites)"/>
</dbReference>
<dbReference type="iPTMnet" id="O54890"/>
<dbReference type="PhosphoSitePlus" id="O54890"/>
<dbReference type="SwissPalm" id="O54890"/>
<dbReference type="PaxDb" id="10090-ENSMUSP00000021028"/>
<dbReference type="PeptideAtlas" id="O54890"/>
<dbReference type="ProteomicsDB" id="268899"/>
<dbReference type="Pumba" id="O54890"/>
<dbReference type="DNASU" id="16416"/>
<dbReference type="Ensembl" id="ENSMUST00000021028.5">
    <property type="protein sequence ID" value="ENSMUSP00000021028.5"/>
    <property type="gene ID" value="ENSMUSG00000020689.5"/>
</dbReference>
<dbReference type="GeneID" id="16416"/>
<dbReference type="KEGG" id="mmu:16416"/>
<dbReference type="UCSC" id="uc007lwx.2">
    <property type="organism name" value="mouse"/>
</dbReference>
<dbReference type="AGR" id="MGI:96612"/>
<dbReference type="CTD" id="3690"/>
<dbReference type="MGI" id="MGI:96612">
    <property type="gene designation" value="Itgb3"/>
</dbReference>
<dbReference type="VEuPathDB" id="HostDB:ENSMUSG00000020689"/>
<dbReference type="eggNOG" id="KOG1226">
    <property type="taxonomic scope" value="Eukaryota"/>
</dbReference>
<dbReference type="GeneTree" id="ENSGT01110000267169"/>
<dbReference type="HOGENOM" id="CLU_011772_0_1_1"/>
<dbReference type="InParanoid" id="O54890"/>
<dbReference type="OMA" id="AKWDTTH"/>
<dbReference type="OrthoDB" id="410592at2759"/>
<dbReference type="PhylomeDB" id="O54890"/>
<dbReference type="TreeFam" id="TF105392"/>
<dbReference type="Reactome" id="R-MMU-114608">
    <property type="pathway name" value="Platelet degranulation"/>
</dbReference>
<dbReference type="Reactome" id="R-MMU-1566948">
    <property type="pathway name" value="Elastic fibre formation"/>
</dbReference>
<dbReference type="Reactome" id="R-MMU-210990">
    <property type="pathway name" value="PECAM1 interactions"/>
</dbReference>
<dbReference type="Reactome" id="R-MMU-2129379">
    <property type="pathway name" value="Molecules associated with elastic fibres"/>
</dbReference>
<dbReference type="Reactome" id="R-MMU-216083">
    <property type="pathway name" value="Integrin cell surface interactions"/>
</dbReference>
<dbReference type="Reactome" id="R-MMU-2173789">
    <property type="pathway name" value="TGF-beta receptor signaling activates SMADs"/>
</dbReference>
<dbReference type="Reactome" id="R-MMU-3000170">
    <property type="pathway name" value="Syndecan interactions"/>
</dbReference>
<dbReference type="Reactome" id="R-MMU-3000178">
    <property type="pathway name" value="ECM proteoglycans"/>
</dbReference>
<dbReference type="Reactome" id="R-MMU-354192">
    <property type="pathway name" value="Integrin signaling"/>
</dbReference>
<dbReference type="Reactome" id="R-MMU-354194">
    <property type="pathway name" value="GRB2:SOS provides linkage to MAPK signaling for Integrins"/>
</dbReference>
<dbReference type="Reactome" id="R-MMU-372708">
    <property type="pathway name" value="p130Cas linkage to MAPK signaling for integrins"/>
</dbReference>
<dbReference type="Reactome" id="R-MMU-4420097">
    <property type="pathway name" value="VEGFA-VEGFR2 Pathway"/>
</dbReference>
<dbReference type="Reactome" id="R-MMU-445144">
    <property type="pathway name" value="Signal transduction by L1"/>
</dbReference>
<dbReference type="Reactome" id="R-MMU-5674135">
    <property type="pathway name" value="MAP2K and MAPK activation"/>
</dbReference>
<dbReference type="Reactome" id="R-MMU-9860927">
    <property type="pathway name" value="Turbulent (oscillatory, disturbed) flow shear stress activates signaling by PIEZO1 and integrins in endothelial cells"/>
</dbReference>
<dbReference type="BioGRID-ORCS" id="16416">
    <property type="hits" value="8 hits in 77 CRISPR screens"/>
</dbReference>
<dbReference type="ChiTaRS" id="Itgb3">
    <property type="organism name" value="mouse"/>
</dbReference>
<dbReference type="PRO" id="PR:O54890"/>
<dbReference type="Proteomes" id="UP000000589">
    <property type="component" value="Chromosome 11"/>
</dbReference>
<dbReference type="RNAct" id="O54890">
    <property type="molecule type" value="protein"/>
</dbReference>
<dbReference type="Bgee" id="ENSMUSG00000020689">
    <property type="expression patterns" value="Expressed in ascending aorta and 127 other cell types or tissues"/>
</dbReference>
<dbReference type="GO" id="GO:0071133">
    <property type="term" value="C:alpha9-beta1 integrin-ADAM8 complex"/>
    <property type="evidence" value="ECO:0000314"/>
    <property type="project" value="BHF-UCL"/>
</dbReference>
<dbReference type="GO" id="GO:0035868">
    <property type="term" value="C:alphav-beta3 integrin-HMGB1 complex"/>
    <property type="evidence" value="ECO:0007669"/>
    <property type="project" value="Ensembl"/>
</dbReference>
<dbReference type="GO" id="GO:0035867">
    <property type="term" value="C:alphav-beta3 integrin-IGF-1-IGF1R complex"/>
    <property type="evidence" value="ECO:0007669"/>
    <property type="project" value="Ensembl"/>
</dbReference>
<dbReference type="GO" id="GO:0035866">
    <property type="term" value="C:alphav-beta3 integrin-PKCalpha complex"/>
    <property type="evidence" value="ECO:0000314"/>
    <property type="project" value="BHF-UCL"/>
</dbReference>
<dbReference type="GO" id="GO:0016324">
    <property type="term" value="C:apical plasma membrane"/>
    <property type="evidence" value="ECO:0000314"/>
    <property type="project" value="MGI"/>
</dbReference>
<dbReference type="GO" id="GO:0009986">
    <property type="term" value="C:cell surface"/>
    <property type="evidence" value="ECO:0000314"/>
    <property type="project" value="UniProtKB"/>
</dbReference>
<dbReference type="GO" id="GO:0005911">
    <property type="term" value="C:cell-cell junction"/>
    <property type="evidence" value="ECO:0007669"/>
    <property type="project" value="Ensembl"/>
</dbReference>
<dbReference type="GO" id="GO:0009897">
    <property type="term" value="C:external side of plasma membrane"/>
    <property type="evidence" value="ECO:0000314"/>
    <property type="project" value="MGI"/>
</dbReference>
<dbReference type="GO" id="GO:0031527">
    <property type="term" value="C:filopodium membrane"/>
    <property type="evidence" value="ECO:0007669"/>
    <property type="project" value="Ensembl"/>
</dbReference>
<dbReference type="GO" id="GO:0005925">
    <property type="term" value="C:focal adhesion"/>
    <property type="evidence" value="ECO:0000314"/>
    <property type="project" value="UniProtKB"/>
</dbReference>
<dbReference type="GO" id="GO:0098978">
    <property type="term" value="C:glutamatergic synapse"/>
    <property type="evidence" value="ECO:0000314"/>
    <property type="project" value="SynGO"/>
</dbReference>
<dbReference type="GO" id="GO:0098690">
    <property type="term" value="C:glycinergic synapse"/>
    <property type="evidence" value="ECO:0007669"/>
    <property type="project" value="Ensembl"/>
</dbReference>
<dbReference type="GO" id="GO:0034679">
    <property type="term" value="C:integrin alpha9-beta1 complex"/>
    <property type="evidence" value="ECO:0000304"/>
    <property type="project" value="BHF-UCL"/>
</dbReference>
<dbReference type="GO" id="GO:0070442">
    <property type="term" value="C:integrin alphaIIb-beta3 complex"/>
    <property type="evidence" value="ECO:0000266"/>
    <property type="project" value="ComplexPortal"/>
</dbReference>
<dbReference type="GO" id="GO:0034683">
    <property type="term" value="C:integrin alphav-beta3 complex"/>
    <property type="evidence" value="ECO:0007669"/>
    <property type="project" value="Ensembl"/>
</dbReference>
<dbReference type="GO" id="GO:0031258">
    <property type="term" value="C:lamellipodium membrane"/>
    <property type="evidence" value="ECO:0007669"/>
    <property type="project" value="UniProtKB-SubCell"/>
</dbReference>
<dbReference type="GO" id="GO:0042470">
    <property type="term" value="C:melanosome"/>
    <property type="evidence" value="ECO:0007669"/>
    <property type="project" value="Ensembl"/>
</dbReference>
<dbReference type="GO" id="GO:0031528">
    <property type="term" value="C:microvillus membrane"/>
    <property type="evidence" value="ECO:0007669"/>
    <property type="project" value="Ensembl"/>
</dbReference>
<dbReference type="GO" id="GO:0005654">
    <property type="term" value="C:nucleoplasm"/>
    <property type="evidence" value="ECO:0007669"/>
    <property type="project" value="Ensembl"/>
</dbReference>
<dbReference type="GO" id="GO:0005634">
    <property type="term" value="C:nucleus"/>
    <property type="evidence" value="ECO:0000266"/>
    <property type="project" value="MGI"/>
</dbReference>
<dbReference type="GO" id="GO:0045211">
    <property type="term" value="C:postsynaptic membrane"/>
    <property type="evidence" value="ECO:0007669"/>
    <property type="project" value="UniProtKB-SubCell"/>
</dbReference>
<dbReference type="GO" id="GO:0043235">
    <property type="term" value="C:receptor complex"/>
    <property type="evidence" value="ECO:0000266"/>
    <property type="project" value="MGI"/>
</dbReference>
<dbReference type="GO" id="GO:0032587">
    <property type="term" value="C:ruffle membrane"/>
    <property type="evidence" value="ECO:0007669"/>
    <property type="project" value="Ensembl"/>
</dbReference>
<dbReference type="GO" id="GO:0045202">
    <property type="term" value="C:synapse"/>
    <property type="evidence" value="ECO:0000314"/>
    <property type="project" value="UniProtKB"/>
</dbReference>
<dbReference type="GO" id="GO:0097060">
    <property type="term" value="C:synaptic membrane"/>
    <property type="evidence" value="ECO:0000314"/>
    <property type="project" value="SynGO"/>
</dbReference>
<dbReference type="GO" id="GO:0019960">
    <property type="term" value="F:C-X3-C chemokine binding"/>
    <property type="evidence" value="ECO:0007669"/>
    <property type="project" value="Ensembl"/>
</dbReference>
<dbReference type="GO" id="GO:0019899">
    <property type="term" value="F:enzyme binding"/>
    <property type="evidence" value="ECO:0000353"/>
    <property type="project" value="UniProtKB"/>
</dbReference>
<dbReference type="GO" id="GO:0050840">
    <property type="term" value="F:extracellular matrix binding"/>
    <property type="evidence" value="ECO:0007669"/>
    <property type="project" value="Ensembl"/>
</dbReference>
<dbReference type="GO" id="GO:0070051">
    <property type="term" value="F:fibrinogen binding"/>
    <property type="evidence" value="ECO:0007669"/>
    <property type="project" value="Ensembl"/>
</dbReference>
<dbReference type="GO" id="GO:0017134">
    <property type="term" value="F:fibroblast growth factor binding"/>
    <property type="evidence" value="ECO:0007669"/>
    <property type="project" value="Ensembl"/>
</dbReference>
<dbReference type="GO" id="GO:0001968">
    <property type="term" value="F:fibronectin binding"/>
    <property type="evidence" value="ECO:0007669"/>
    <property type="project" value="Ensembl"/>
</dbReference>
<dbReference type="GO" id="GO:0042802">
    <property type="term" value="F:identical protein binding"/>
    <property type="evidence" value="ECO:0007669"/>
    <property type="project" value="Ensembl"/>
</dbReference>
<dbReference type="GO" id="GO:0031994">
    <property type="term" value="F:insulin-like growth factor I binding"/>
    <property type="evidence" value="ECO:0007669"/>
    <property type="project" value="Ensembl"/>
</dbReference>
<dbReference type="GO" id="GO:0005178">
    <property type="term" value="F:integrin binding"/>
    <property type="evidence" value="ECO:0000353"/>
    <property type="project" value="MGI"/>
</dbReference>
<dbReference type="GO" id="GO:0046872">
    <property type="term" value="F:metal ion binding"/>
    <property type="evidence" value="ECO:0007669"/>
    <property type="project" value="UniProtKB-KW"/>
</dbReference>
<dbReference type="GO" id="GO:0038132">
    <property type="term" value="F:neuregulin binding"/>
    <property type="evidence" value="ECO:0007669"/>
    <property type="project" value="Ensembl"/>
</dbReference>
<dbReference type="GO" id="GO:0002020">
    <property type="term" value="F:protease binding"/>
    <property type="evidence" value="ECO:0007669"/>
    <property type="project" value="Ensembl"/>
</dbReference>
<dbReference type="GO" id="GO:0003756">
    <property type="term" value="F:protein disulfide isomerase activity"/>
    <property type="evidence" value="ECO:0007669"/>
    <property type="project" value="Ensembl"/>
</dbReference>
<dbReference type="GO" id="GO:0005080">
    <property type="term" value="F:protein kinase C binding"/>
    <property type="evidence" value="ECO:0000353"/>
    <property type="project" value="BHF-UCL"/>
</dbReference>
<dbReference type="GO" id="GO:0043184">
    <property type="term" value="F:vascular endothelial growth factor receptor 2 binding"/>
    <property type="evidence" value="ECO:0007669"/>
    <property type="project" value="Ensembl"/>
</dbReference>
<dbReference type="GO" id="GO:0038027">
    <property type="term" value="P:apolipoprotein A-I-mediated signaling pathway"/>
    <property type="evidence" value="ECO:0007669"/>
    <property type="project" value="Ensembl"/>
</dbReference>
<dbReference type="GO" id="GO:0043277">
    <property type="term" value="P:apoptotic cell clearance"/>
    <property type="evidence" value="ECO:0000316"/>
    <property type="project" value="BHF-UCL"/>
</dbReference>
<dbReference type="GO" id="GO:0072378">
    <property type="term" value="P:blood coagulation, fibrin clot formation"/>
    <property type="evidence" value="ECO:0000315"/>
    <property type="project" value="MGI"/>
</dbReference>
<dbReference type="GO" id="GO:0033627">
    <property type="term" value="P:cell adhesion mediated by integrin"/>
    <property type="evidence" value="ECO:0000250"/>
    <property type="project" value="UniProtKB"/>
</dbReference>
<dbReference type="GO" id="GO:0048858">
    <property type="term" value="P:cell projection morphogenesis"/>
    <property type="evidence" value="ECO:0000305"/>
    <property type="project" value="BHF-UCL"/>
</dbReference>
<dbReference type="GO" id="GO:0007160">
    <property type="term" value="P:cell-matrix adhesion"/>
    <property type="evidence" value="ECO:0000316"/>
    <property type="project" value="MGI"/>
</dbReference>
<dbReference type="GO" id="GO:0007044">
    <property type="term" value="P:cell-substrate junction assembly"/>
    <property type="evidence" value="ECO:0000314"/>
    <property type="project" value="MGI"/>
</dbReference>
<dbReference type="GO" id="GO:1990314">
    <property type="term" value="P:cellular response to insulin-like growth factor stimulus"/>
    <property type="evidence" value="ECO:0007669"/>
    <property type="project" value="Ensembl"/>
</dbReference>
<dbReference type="GO" id="GO:0071260">
    <property type="term" value="P:cellular response to mechanical stimulus"/>
    <property type="evidence" value="ECO:0007669"/>
    <property type="project" value="Ensembl"/>
</dbReference>
<dbReference type="GO" id="GO:0036120">
    <property type="term" value="P:cellular response to platelet-derived growth factor stimulus"/>
    <property type="evidence" value="ECO:0000315"/>
    <property type="project" value="MGI"/>
</dbReference>
<dbReference type="GO" id="GO:0071466">
    <property type="term" value="P:cellular response to xenobiotic stimulus"/>
    <property type="evidence" value="ECO:0007669"/>
    <property type="project" value="Ensembl"/>
</dbReference>
<dbReference type="GO" id="GO:0007566">
    <property type="term" value="P:embryo implantation"/>
    <property type="evidence" value="ECO:0007669"/>
    <property type="project" value="Ensembl"/>
</dbReference>
<dbReference type="GO" id="GO:0034113">
    <property type="term" value="P:heterotypic cell-cell adhesion"/>
    <property type="evidence" value="ECO:0007669"/>
    <property type="project" value="Ensembl"/>
</dbReference>
<dbReference type="GO" id="GO:0007229">
    <property type="term" value="P:integrin-mediated signaling pathway"/>
    <property type="evidence" value="ECO:0000315"/>
    <property type="project" value="BHF-UCL"/>
</dbReference>
<dbReference type="GO" id="GO:0098880">
    <property type="term" value="P:maintenance of postsynaptic specialization structure"/>
    <property type="evidence" value="ECO:0007669"/>
    <property type="project" value="Ensembl"/>
</dbReference>
<dbReference type="GO" id="GO:0048333">
    <property type="term" value="P:mesodermal cell differentiation"/>
    <property type="evidence" value="ECO:0007669"/>
    <property type="project" value="Ensembl"/>
</dbReference>
<dbReference type="GO" id="GO:0050919">
    <property type="term" value="P:negative chemotaxis"/>
    <property type="evidence" value="ECO:0007669"/>
    <property type="project" value="Ensembl"/>
</dbReference>
<dbReference type="GO" id="GO:2000352">
    <property type="term" value="P:negative regulation of endothelial cell apoptotic process"/>
    <property type="evidence" value="ECO:0007669"/>
    <property type="project" value="Ensembl"/>
</dbReference>
<dbReference type="GO" id="GO:0010888">
    <property type="term" value="P:negative regulation of lipid storage"/>
    <property type="evidence" value="ECO:0007669"/>
    <property type="project" value="Ensembl"/>
</dbReference>
<dbReference type="GO" id="GO:0032369">
    <property type="term" value="P:negative regulation of lipid transport"/>
    <property type="evidence" value="ECO:0007669"/>
    <property type="project" value="Ensembl"/>
</dbReference>
<dbReference type="GO" id="GO:0050748">
    <property type="term" value="P:negative regulation of lipoprotein metabolic process"/>
    <property type="evidence" value="ECO:0007669"/>
    <property type="project" value="Ensembl"/>
</dbReference>
<dbReference type="GO" id="GO:0010989">
    <property type="term" value="P:negative regulation of low-density lipoprotein particle clearance"/>
    <property type="evidence" value="ECO:0007669"/>
    <property type="project" value="Ensembl"/>
</dbReference>
<dbReference type="GO" id="GO:0010745">
    <property type="term" value="P:negative regulation of macrophage derived foam cell differentiation"/>
    <property type="evidence" value="ECO:0007669"/>
    <property type="project" value="Ensembl"/>
</dbReference>
<dbReference type="GO" id="GO:0070527">
    <property type="term" value="P:platelet aggregation"/>
    <property type="evidence" value="ECO:0000315"/>
    <property type="project" value="MGI"/>
</dbReference>
<dbReference type="GO" id="GO:0048008">
    <property type="term" value="P:platelet-derived growth factor receptor signaling pathway"/>
    <property type="evidence" value="ECO:0000315"/>
    <property type="project" value="MGI"/>
</dbReference>
<dbReference type="GO" id="GO:1900731">
    <property type="term" value="P:positive regulation of adenylate cyclase-inhibiting opioid receptor signaling pathway"/>
    <property type="evidence" value="ECO:0007669"/>
    <property type="project" value="Ensembl"/>
</dbReference>
<dbReference type="GO" id="GO:0045766">
    <property type="term" value="P:positive regulation of angiogenesis"/>
    <property type="evidence" value="ECO:0007669"/>
    <property type="project" value="Ensembl"/>
</dbReference>
<dbReference type="GO" id="GO:0045780">
    <property type="term" value="P:positive regulation of bone resorption"/>
    <property type="evidence" value="ECO:0000305"/>
    <property type="project" value="BHF-UCL"/>
</dbReference>
<dbReference type="GO" id="GO:0033630">
    <property type="term" value="P:positive regulation of cell adhesion mediated by integrin"/>
    <property type="evidence" value="ECO:0007669"/>
    <property type="project" value="Ensembl"/>
</dbReference>
<dbReference type="GO" id="GO:0030335">
    <property type="term" value="P:positive regulation of cell migration"/>
    <property type="evidence" value="ECO:0000315"/>
    <property type="project" value="BHF-UCL"/>
</dbReference>
<dbReference type="GO" id="GO:0001954">
    <property type="term" value="P:positive regulation of cell-matrix adhesion"/>
    <property type="evidence" value="ECO:0000315"/>
    <property type="project" value="MGI"/>
</dbReference>
<dbReference type="GO" id="GO:0010595">
    <property type="term" value="P:positive regulation of endothelial cell migration"/>
    <property type="evidence" value="ECO:0007669"/>
    <property type="project" value="Ensembl"/>
</dbReference>
<dbReference type="GO" id="GO:0001938">
    <property type="term" value="P:positive regulation of endothelial cell proliferation"/>
    <property type="evidence" value="ECO:0007669"/>
    <property type="project" value="Ensembl"/>
</dbReference>
<dbReference type="GO" id="GO:0070374">
    <property type="term" value="P:positive regulation of ERK1 and ERK2 cascade"/>
    <property type="evidence" value="ECO:0007669"/>
    <property type="project" value="Ensembl"/>
</dbReference>
<dbReference type="GO" id="GO:0010763">
    <property type="term" value="P:positive regulation of fibroblast migration"/>
    <property type="evidence" value="ECO:0000315"/>
    <property type="project" value="MGI"/>
</dbReference>
<dbReference type="GO" id="GO:0048146">
    <property type="term" value="P:positive regulation of fibroblast proliferation"/>
    <property type="evidence" value="ECO:0000315"/>
    <property type="project" value="MGI"/>
</dbReference>
<dbReference type="GO" id="GO:0010628">
    <property type="term" value="P:positive regulation of gene expression"/>
    <property type="evidence" value="ECO:0000315"/>
    <property type="project" value="UniProtKB"/>
</dbReference>
<dbReference type="GO" id="GO:0072126">
    <property type="term" value="P:positive regulation of glomerular mesangial cell proliferation"/>
    <property type="evidence" value="ECO:0007669"/>
    <property type="project" value="Ensembl"/>
</dbReference>
<dbReference type="GO" id="GO:0033690">
    <property type="term" value="P:positive regulation of osteoblast proliferation"/>
    <property type="evidence" value="ECO:0000315"/>
    <property type="project" value="BHF-UCL"/>
</dbReference>
<dbReference type="GO" id="GO:0045672">
    <property type="term" value="P:positive regulation of osteoclast differentiation"/>
    <property type="evidence" value="ECO:0000305"/>
    <property type="project" value="BHF-UCL"/>
</dbReference>
<dbReference type="GO" id="GO:0014911">
    <property type="term" value="P:positive regulation of smooth muscle cell migration"/>
    <property type="evidence" value="ECO:0007669"/>
    <property type="project" value="Ensembl"/>
</dbReference>
<dbReference type="GO" id="GO:0048661">
    <property type="term" value="P:positive regulation of smooth muscle cell proliferation"/>
    <property type="evidence" value="ECO:0007669"/>
    <property type="project" value="Ensembl"/>
</dbReference>
<dbReference type="GO" id="GO:1900026">
    <property type="term" value="P:positive regulation of substrate adhesion-dependent cell spreading"/>
    <property type="evidence" value="ECO:0000315"/>
    <property type="project" value="MGI"/>
</dbReference>
<dbReference type="GO" id="GO:2000406">
    <property type="term" value="P:positive regulation of T cell migration"/>
    <property type="evidence" value="ECO:0000314"/>
    <property type="project" value="UniProtKB"/>
</dbReference>
<dbReference type="GO" id="GO:1900748">
    <property type="term" value="P:positive regulation of vascular endothelial growth factor signaling pathway"/>
    <property type="evidence" value="ECO:0007669"/>
    <property type="project" value="Ensembl"/>
</dbReference>
<dbReference type="GO" id="GO:0032956">
    <property type="term" value="P:regulation of actin cytoskeleton organization"/>
    <property type="evidence" value="ECO:0000315"/>
    <property type="project" value="UniProtKB"/>
</dbReference>
<dbReference type="GO" id="GO:1903053">
    <property type="term" value="P:regulation of extracellular matrix organization"/>
    <property type="evidence" value="ECO:0000315"/>
    <property type="project" value="MGI"/>
</dbReference>
<dbReference type="GO" id="GO:0150054">
    <property type="term" value="P:regulation of postsynaptic neurotransmitter receptor diffusion trapping"/>
    <property type="evidence" value="ECO:0007669"/>
    <property type="project" value="Ensembl"/>
</dbReference>
<dbReference type="GO" id="GO:0099149">
    <property type="term" value="P:regulation of postsynaptic neurotransmitter receptor internalization"/>
    <property type="evidence" value="ECO:0007669"/>
    <property type="project" value="Ensembl"/>
</dbReference>
<dbReference type="GO" id="GO:0032880">
    <property type="term" value="P:regulation of protein localization"/>
    <property type="evidence" value="ECO:0000315"/>
    <property type="project" value="UniProtKB"/>
</dbReference>
<dbReference type="GO" id="GO:0051279">
    <property type="term" value="P:regulation of release of sequestered calcium ion into cytosol"/>
    <property type="evidence" value="ECO:0007669"/>
    <property type="project" value="Ensembl"/>
</dbReference>
<dbReference type="GO" id="GO:0051611">
    <property type="term" value="P:regulation of serotonin uptake"/>
    <property type="evidence" value="ECO:0000315"/>
    <property type="project" value="UniProtKB"/>
</dbReference>
<dbReference type="GO" id="GO:1901163">
    <property type="term" value="P:regulation of trophoblast cell migration"/>
    <property type="evidence" value="ECO:0000315"/>
    <property type="project" value="MGI"/>
</dbReference>
<dbReference type="GO" id="GO:0014823">
    <property type="term" value="P:response to activity"/>
    <property type="evidence" value="ECO:0007669"/>
    <property type="project" value="Ensembl"/>
</dbReference>
<dbReference type="GO" id="GO:0014909">
    <property type="term" value="P:smooth muscle cell migration"/>
    <property type="evidence" value="ECO:0007669"/>
    <property type="project" value="Ensembl"/>
</dbReference>
<dbReference type="GO" id="GO:0034446">
    <property type="term" value="P:substrate adhesion-dependent cell spreading"/>
    <property type="evidence" value="ECO:0007669"/>
    <property type="project" value="Ensembl"/>
</dbReference>
<dbReference type="GO" id="GO:0046718">
    <property type="term" value="P:symbiont entry into host cell"/>
    <property type="evidence" value="ECO:0007669"/>
    <property type="project" value="Ensembl"/>
</dbReference>
<dbReference type="FunFam" id="1.20.5.100:FF:000002">
    <property type="entry name" value="Integrin beta"/>
    <property type="match status" value="1"/>
</dbReference>
<dbReference type="FunFam" id="2.10.25.10:FF:000036">
    <property type="entry name" value="Integrin beta"/>
    <property type="match status" value="1"/>
</dbReference>
<dbReference type="FunFam" id="2.10.25.10:FF:000075">
    <property type="entry name" value="Integrin beta"/>
    <property type="match status" value="1"/>
</dbReference>
<dbReference type="FunFam" id="2.60.40.1510:FF:000004">
    <property type="entry name" value="Integrin beta"/>
    <property type="match status" value="1"/>
</dbReference>
<dbReference type="FunFam" id="3.30.1680.10:FF:000002">
    <property type="entry name" value="Integrin beta"/>
    <property type="match status" value="1"/>
</dbReference>
<dbReference type="FunFam" id="3.40.50.410:FF:000002">
    <property type="entry name" value="Integrin beta"/>
    <property type="match status" value="1"/>
</dbReference>
<dbReference type="FunFam" id="4.10.1240.30:FF:000001">
    <property type="entry name" value="Integrin beta"/>
    <property type="match status" value="1"/>
</dbReference>
<dbReference type="Gene3D" id="4.10.1240.30">
    <property type="match status" value="1"/>
</dbReference>
<dbReference type="Gene3D" id="1.20.5.100">
    <property type="entry name" value="Cytochrome c1, transmembrane anchor, C-terminal"/>
    <property type="match status" value="1"/>
</dbReference>
<dbReference type="Gene3D" id="2.10.25.10">
    <property type="entry name" value="Laminin"/>
    <property type="match status" value="4"/>
</dbReference>
<dbReference type="Gene3D" id="3.30.1680.10">
    <property type="entry name" value="ligand-binding face of the semaphorins, domain 2"/>
    <property type="match status" value="1"/>
</dbReference>
<dbReference type="Gene3D" id="2.60.40.1510">
    <property type="entry name" value="ntegrin, alpha v. Chain A, domain 3"/>
    <property type="match status" value="1"/>
</dbReference>
<dbReference type="Gene3D" id="3.40.50.410">
    <property type="entry name" value="von Willebrand factor, type A domain"/>
    <property type="match status" value="1"/>
</dbReference>
<dbReference type="InterPro" id="IPR013111">
    <property type="entry name" value="EGF_extracell"/>
</dbReference>
<dbReference type="InterPro" id="IPR040622">
    <property type="entry name" value="I-EGF_1"/>
</dbReference>
<dbReference type="InterPro" id="IPR033760">
    <property type="entry name" value="Integrin_beta_N"/>
</dbReference>
<dbReference type="InterPro" id="IPR015812">
    <property type="entry name" value="Integrin_bsu"/>
</dbReference>
<dbReference type="InterPro" id="IPR014836">
    <property type="entry name" value="Integrin_bsu_cyt_dom"/>
</dbReference>
<dbReference type="InterPro" id="IPR012896">
    <property type="entry name" value="Integrin_bsu_tail"/>
</dbReference>
<dbReference type="InterPro" id="IPR036349">
    <property type="entry name" value="Integrin_bsu_tail_dom_sf"/>
</dbReference>
<dbReference type="InterPro" id="IPR002369">
    <property type="entry name" value="Integrin_bsu_VWA"/>
</dbReference>
<dbReference type="InterPro" id="IPR032695">
    <property type="entry name" value="Integrin_dom_sf"/>
</dbReference>
<dbReference type="InterPro" id="IPR016201">
    <property type="entry name" value="PSI"/>
</dbReference>
<dbReference type="InterPro" id="IPR036465">
    <property type="entry name" value="vWFA_dom_sf"/>
</dbReference>
<dbReference type="PANTHER" id="PTHR10082">
    <property type="entry name" value="INTEGRIN BETA SUBUNIT"/>
    <property type="match status" value="1"/>
</dbReference>
<dbReference type="PANTHER" id="PTHR10082:SF25">
    <property type="entry name" value="INTEGRIN BETA-3"/>
    <property type="match status" value="1"/>
</dbReference>
<dbReference type="Pfam" id="PF07974">
    <property type="entry name" value="EGF_2"/>
    <property type="match status" value="1"/>
</dbReference>
<dbReference type="Pfam" id="PF23105">
    <property type="entry name" value="EGF_integrin"/>
    <property type="match status" value="1"/>
</dbReference>
<dbReference type="Pfam" id="PF18372">
    <property type="entry name" value="I-EGF_1"/>
    <property type="match status" value="1"/>
</dbReference>
<dbReference type="Pfam" id="PF08725">
    <property type="entry name" value="Integrin_b_cyt"/>
    <property type="match status" value="1"/>
</dbReference>
<dbReference type="Pfam" id="PF07965">
    <property type="entry name" value="Integrin_B_tail"/>
    <property type="match status" value="1"/>
</dbReference>
<dbReference type="Pfam" id="PF00362">
    <property type="entry name" value="Integrin_beta"/>
    <property type="match status" value="1"/>
</dbReference>
<dbReference type="Pfam" id="PF17205">
    <property type="entry name" value="PSI_integrin"/>
    <property type="match status" value="1"/>
</dbReference>
<dbReference type="PIRSF" id="PIRSF002512">
    <property type="entry name" value="Integrin_B"/>
    <property type="match status" value="1"/>
</dbReference>
<dbReference type="PRINTS" id="PR01186">
    <property type="entry name" value="INTEGRINB"/>
</dbReference>
<dbReference type="SMART" id="SM00187">
    <property type="entry name" value="INB"/>
    <property type="match status" value="1"/>
</dbReference>
<dbReference type="SMART" id="SM01241">
    <property type="entry name" value="Integrin_b_cyt"/>
    <property type="match status" value="1"/>
</dbReference>
<dbReference type="SMART" id="SM01242">
    <property type="entry name" value="Integrin_B_tail"/>
    <property type="match status" value="1"/>
</dbReference>
<dbReference type="SMART" id="SM00423">
    <property type="entry name" value="PSI"/>
    <property type="match status" value="1"/>
</dbReference>
<dbReference type="SUPFAM" id="SSF57196">
    <property type="entry name" value="EGF/Laminin"/>
    <property type="match status" value="2"/>
</dbReference>
<dbReference type="SUPFAM" id="SSF69687">
    <property type="entry name" value="Integrin beta tail domain"/>
    <property type="match status" value="1"/>
</dbReference>
<dbReference type="SUPFAM" id="SSF69179">
    <property type="entry name" value="Integrin domains"/>
    <property type="match status" value="1"/>
</dbReference>
<dbReference type="SUPFAM" id="SSF103575">
    <property type="entry name" value="Plexin repeat"/>
    <property type="match status" value="1"/>
</dbReference>
<dbReference type="SUPFAM" id="SSF53300">
    <property type="entry name" value="vWA-like"/>
    <property type="match status" value="1"/>
</dbReference>
<dbReference type="PROSITE" id="PS00022">
    <property type="entry name" value="EGF_1"/>
    <property type="match status" value="2"/>
</dbReference>
<dbReference type="PROSITE" id="PS01186">
    <property type="entry name" value="EGF_2"/>
    <property type="match status" value="1"/>
</dbReference>
<dbReference type="PROSITE" id="PS00243">
    <property type="entry name" value="I_EGF_1"/>
    <property type="match status" value="3"/>
</dbReference>
<dbReference type="PROSITE" id="PS52047">
    <property type="entry name" value="I_EGF_2"/>
    <property type="match status" value="4"/>
</dbReference>
<keyword id="KW-0002">3D-structure</keyword>
<keyword id="KW-0106">Calcium</keyword>
<keyword id="KW-0130">Cell adhesion</keyword>
<keyword id="KW-0965">Cell junction</keyword>
<keyword id="KW-1003">Cell membrane</keyword>
<keyword id="KW-0966">Cell projection</keyword>
<keyword id="KW-1015">Disulfide bond</keyword>
<keyword id="KW-0245">EGF-like domain</keyword>
<keyword id="KW-0325">Glycoprotein</keyword>
<keyword id="KW-0401">Integrin</keyword>
<keyword id="KW-0460">Magnesium</keyword>
<keyword id="KW-0472">Membrane</keyword>
<keyword id="KW-0479">Metal-binding</keyword>
<keyword id="KW-0597">Phosphoprotein</keyword>
<keyword id="KW-0628">Postsynaptic cell membrane</keyword>
<keyword id="KW-0675">Receptor</keyword>
<keyword id="KW-1185">Reference proteome</keyword>
<keyword id="KW-0677">Repeat</keyword>
<keyword id="KW-0732">Signal</keyword>
<keyword id="KW-0770">Synapse</keyword>
<keyword id="KW-0812">Transmembrane</keyword>
<keyword id="KW-1133">Transmembrane helix</keyword>
<feature type="signal peptide" evidence="3">
    <location>
        <begin position="1"/>
        <end position="25"/>
    </location>
</feature>
<feature type="chain" id="PRO_0000016345" description="Integrin beta-3">
    <location>
        <begin position="26"/>
        <end position="787"/>
    </location>
</feature>
<feature type="topological domain" description="Extracellular" evidence="3">
    <location>
        <begin position="26"/>
        <end position="717"/>
    </location>
</feature>
<feature type="transmembrane region" description="Helical" evidence="3">
    <location>
        <begin position="718"/>
        <end position="740"/>
    </location>
</feature>
<feature type="topological domain" description="Cytoplasmic" evidence="3">
    <location>
        <begin position="741"/>
        <end position="787"/>
    </location>
</feature>
<feature type="domain" description="PSI" evidence="3">
    <location>
        <begin position="29"/>
        <end position="75"/>
    </location>
</feature>
<feature type="domain" description="VWFA" evidence="1">
    <location>
        <begin position="134"/>
        <end position="376"/>
    </location>
</feature>
<feature type="domain" description="I-EGF 1" evidence="4">
    <location>
        <begin position="462"/>
        <end position="497"/>
    </location>
</feature>
<feature type="domain" description="I-EGF 2" evidence="4">
    <location>
        <begin position="498"/>
        <end position="547"/>
    </location>
</feature>
<feature type="domain" description="I-EGF 3" evidence="4">
    <location>
        <begin position="548"/>
        <end position="584"/>
    </location>
</feature>
<feature type="domain" description="I-EGF 4" evidence="4">
    <location>
        <begin position="585"/>
        <end position="624"/>
    </location>
</feature>
<feature type="region of interest" description="CX3CL1-binding" evidence="1">
    <location>
        <begin position="202"/>
        <end position="209"/>
    </location>
</feature>
<feature type="region of interest" description="Involved in CX3CL1-, NRG1-, FGF1- and IGF1-binding" evidence="1">
    <location>
        <begin position="202"/>
        <end position="209"/>
    </location>
</feature>
<feature type="region of interest" description="CX3CL1-binding" evidence="1">
    <location>
        <begin position="292"/>
        <end position="312"/>
    </location>
</feature>
<feature type="short sequence motif" description="LIR" evidence="1">
    <location>
        <begin position="776"/>
        <end position="782"/>
    </location>
</feature>
<feature type="binding site" description="in MIDAS binding site" evidence="1">
    <location>
        <position position="146"/>
    </location>
    <ligand>
        <name>Mg(2+)</name>
        <dbReference type="ChEBI" id="CHEBI:18420"/>
    </ligand>
</feature>
<feature type="binding site" description="in ADMIDAS binding site" evidence="1">
    <location>
        <position position="148"/>
    </location>
    <ligand>
        <name>Ca(2+)</name>
        <dbReference type="ChEBI" id="CHEBI:29108"/>
        <label>1</label>
    </ligand>
</feature>
<feature type="binding site" description="in MIDAS binding site" evidence="1">
    <location>
        <position position="148"/>
    </location>
    <ligand>
        <name>Mg(2+)</name>
        <dbReference type="ChEBI" id="CHEBI:18420"/>
    </ligand>
</feature>
<feature type="binding site" description="in ADMIDAS binding site" evidence="1">
    <location>
        <position position="151"/>
    </location>
    <ligand>
        <name>Ca(2+)</name>
        <dbReference type="ChEBI" id="CHEBI:29108"/>
        <label>1</label>
    </ligand>
</feature>
<feature type="binding site" description="in ADMIDAS binding site" evidence="1">
    <location>
        <position position="152"/>
    </location>
    <ligand>
        <name>Ca(2+)</name>
        <dbReference type="ChEBI" id="CHEBI:29108"/>
        <label>1</label>
    </ligand>
</feature>
<feature type="binding site" description="in LIMBS binding site" evidence="1">
    <location>
        <position position="183"/>
    </location>
    <ligand>
        <name>Ca(2+)</name>
        <dbReference type="ChEBI" id="CHEBI:29108"/>
        <label>2</label>
    </ligand>
</feature>
<feature type="binding site" description="in LIMBS binding site" evidence="1">
    <location>
        <position position="240"/>
    </location>
    <ligand>
        <name>Ca(2+)</name>
        <dbReference type="ChEBI" id="CHEBI:29108"/>
        <label>2</label>
    </ligand>
</feature>
<feature type="binding site" description="in LIMBS binding site" evidence="1">
    <location>
        <position position="242"/>
    </location>
    <ligand>
        <name>Ca(2+)</name>
        <dbReference type="ChEBI" id="CHEBI:29108"/>
        <label>2</label>
    </ligand>
</feature>
<feature type="binding site" description="in LIMBS binding site" evidence="1">
    <location>
        <position position="244"/>
    </location>
    <ligand>
        <name>Ca(2+)</name>
        <dbReference type="ChEBI" id="CHEBI:29108"/>
        <label>2</label>
    </ligand>
</feature>
<feature type="binding site" description="in LIMBS binding site" evidence="1">
    <location>
        <position position="245"/>
    </location>
    <ligand>
        <name>Ca(2+)</name>
        <dbReference type="ChEBI" id="CHEBI:29108"/>
        <label>2</label>
    </ligand>
</feature>
<feature type="binding site" description="in MIDAS binding site" evidence="1">
    <location>
        <position position="245"/>
    </location>
    <ligand>
        <name>Mg(2+)</name>
        <dbReference type="ChEBI" id="CHEBI:18420"/>
    </ligand>
</feature>
<feature type="binding site" description="in ADMIDAS binding site and liganded-open conformation" evidence="1">
    <location>
        <position position="276"/>
    </location>
    <ligand>
        <name>Ca(2+)</name>
        <dbReference type="ChEBI" id="CHEBI:29108"/>
        <label>1</label>
    </ligand>
</feature>
<feature type="binding site" description="in LIMBS binding site" evidence="1">
    <location>
        <position position="276"/>
    </location>
    <ligand>
        <name>Ca(2+)</name>
        <dbReference type="ChEBI" id="CHEBI:29108"/>
        <label>2</label>
    </ligand>
</feature>
<feature type="modified residue" description="Phosphothreonine" evidence="19">
    <location>
        <position position="766"/>
    </location>
</feature>
<feature type="modified residue" description="Phosphotyrosine" evidence="1">
    <location>
        <position position="772"/>
    </location>
</feature>
<feature type="modified residue" description="Phosphothreonine" evidence="1">
    <location>
        <position position="778"/>
    </location>
</feature>
<feature type="modified residue" description="Phosphotyrosine" evidence="1">
    <location>
        <position position="784"/>
    </location>
</feature>
<feature type="glycosylation site" description="N-linked (GlcNAc...) asparagine" evidence="3">
    <location>
        <position position="345"/>
    </location>
</feature>
<feature type="glycosylation site" description="N-linked (GlcNAc...) asparagine" evidence="3">
    <location>
        <position position="396"/>
    </location>
</feature>
<feature type="glycosylation site" description="N-linked (GlcNAc...) asparagine" evidence="3">
    <location>
        <position position="477"/>
    </location>
</feature>
<feature type="glycosylation site" description="N-linked (GlcNAc...) asparagine" evidence="3">
    <location>
        <position position="584"/>
    </location>
</feature>
<feature type="glycosylation site" description="N-linked (GlcNAc...) asparagine" evidence="3">
    <location>
        <position position="679"/>
    </location>
</feature>
<feature type="disulfide bond" evidence="1">
    <location>
        <begin position="30"/>
        <end position="48"/>
    </location>
</feature>
<feature type="disulfide bond" evidence="1">
    <location>
        <begin position="38"/>
        <end position="460"/>
    </location>
</feature>
<feature type="disulfide bond" evidence="1">
    <location>
        <begin position="41"/>
        <end position="63"/>
    </location>
</feature>
<feature type="disulfide bond" evidence="1">
    <location>
        <begin position="51"/>
        <end position="74"/>
    </location>
</feature>
<feature type="disulfide bond" evidence="1">
    <location>
        <begin position="202"/>
        <end position="209"/>
    </location>
</feature>
<feature type="disulfide bond" evidence="1">
    <location>
        <begin position="257"/>
        <end position="298"/>
    </location>
</feature>
<feature type="disulfide bond" evidence="1">
    <location>
        <begin position="399"/>
        <end position="411"/>
    </location>
</feature>
<feature type="disulfide bond" evidence="1">
    <location>
        <begin position="431"/>
        <end position="458"/>
    </location>
</feature>
<feature type="disulfide bond" evidence="4">
    <location>
        <begin position="462"/>
        <end position="482"/>
    </location>
</feature>
<feature type="disulfide bond" evidence="4">
    <location>
        <begin position="473"/>
        <end position="485"/>
    </location>
</feature>
<feature type="disulfide bond" evidence="4">
    <location>
        <begin position="487"/>
        <end position="496"/>
    </location>
</feature>
<feature type="disulfide bond" evidence="4">
    <location>
        <begin position="498"/>
        <end position="528"/>
    </location>
</feature>
<feature type="disulfide bond" evidence="4">
    <location>
        <begin position="511"/>
        <end position="526"/>
    </location>
</feature>
<feature type="disulfide bond" evidence="4">
    <location>
        <begin position="520"/>
        <end position="531"/>
    </location>
</feature>
<feature type="disulfide bond" evidence="4">
    <location>
        <begin position="533"/>
        <end position="546"/>
    </location>
</feature>
<feature type="disulfide bond" evidence="4">
    <location>
        <begin position="548"/>
        <end position="569"/>
    </location>
</feature>
<feature type="disulfide bond" evidence="4">
    <location>
        <begin position="553"/>
        <end position="567"/>
    </location>
</feature>
<feature type="disulfide bond" evidence="4">
    <location>
        <begin position="561"/>
        <end position="572"/>
    </location>
</feature>
<feature type="disulfide bond" evidence="4">
    <location>
        <begin position="574"/>
        <end position="583"/>
    </location>
</feature>
<feature type="disulfide bond" evidence="4">
    <location>
        <begin position="585"/>
        <end position="608"/>
    </location>
</feature>
<feature type="disulfide bond" evidence="4">
    <location>
        <begin position="592"/>
        <end position="606"/>
    </location>
</feature>
<feature type="disulfide bond" evidence="4">
    <location>
        <begin position="600"/>
        <end position="611"/>
    </location>
</feature>
<feature type="disulfide bond" evidence="4">
    <location>
        <begin position="613"/>
        <end position="623"/>
    </location>
</feature>
<feature type="disulfide bond" evidence="1">
    <location>
        <begin position="626"/>
        <end position="629"/>
    </location>
</feature>
<feature type="disulfide bond" evidence="1">
    <location>
        <begin position="633"/>
        <end position="680"/>
    </location>
</feature>
<feature type="disulfide bond" evidence="1">
    <location>
        <begin position="639"/>
        <end position="660"/>
    </location>
</feature>
<feature type="disulfide bond" evidence="1">
    <location>
        <begin position="642"/>
        <end position="656"/>
    </location>
</feature>
<feature type="disulfide bond" evidence="1">
    <location>
        <begin position="688"/>
        <end position="712"/>
    </location>
</feature>
<feature type="mutagenesis site" description="Mice display deficits in anxiety as well as in repetitive and social behaviors. Decreases levels of serotonin synapses in midbrain, SLC6A4 activity and location at integrin adhesion complexes in synapses." evidence="14">
    <original>QG</original>
    <variation>PP</variation>
    <location>
        <begin position="58"/>
        <end position="59"/>
    </location>
</feature>
<feature type="sequence conflict" description="In Ref. 1; AAB94086." evidence="17" ref="1">
    <original>A</original>
    <variation>V</variation>
    <location>
        <position position="114"/>
    </location>
</feature>
<feature type="sequence conflict" description="In Ref. 1; AAB94086." evidence="17" ref="1">
    <original>E</original>
    <variation>G</variation>
    <location>
        <position position="389"/>
    </location>
</feature>
<feature type="strand" evidence="20">
    <location>
        <begin position="777"/>
        <end position="780"/>
    </location>
</feature>
<proteinExistence type="evidence at protein level"/>
<sequence>MRAQWPGQLWAALLALGALAGVVVGESNICTTRGVNSCQQCLAVSPVCAWCSDETLSQGSPRCNLKENLLKDNCAPESIEFPVSEAQILEARPLSSKGSGSSAQITQVSPQRIALRLRPDDSKIFSLQVRQVEDYPVDIYYLMDLSFSMKDDLSSIQTLGTKLASQMRKLTSNLRIGFGAFVDKPVSPYMYISPPQAIKNPCYNMKNACLPMFGYKHVLTLTDQVSRFNEEVKKQSVSRNRDAPEGGFDAIMQATVCDEKIGWRNDASHLLVFTTDAKTHIALDGRLAGIVLPNDGHCHIGTDNHYSASTTMDYPSLGLMTEKLSQKNINLIFAVTENVVSLYQNYSELIPGTTVGVLSDDSSNVLQLIVDAYGKIRSKVELEVRDLPEELSLSFNATCLNNEVIPGLKSCVGLKIGDTVSFSIEAKVRGCPQEKEQSFTIKPVGFKDSLTVQVTFDCDCACQAFAQPSSPRCNNGNGTFECGVCRCDQGWLGSMCECSEEDYRPSQQEECSPKEGQPICSQRGECLCGQCVCHSSDFGKITGKYCECDDFSCVRYKGEMCSGHGQCNCGDCVCDSDWTGYYCNCTTRTDTCMSTNGLLCSGRGNCECGSCVCVQPGSYGDTCEKCPTCPDACSFKKECVECKKFNRGTLHEENTCSRYCRDDIEQVKELTDTGKNAVNCTYKNEDDCVVRFQYYEDTSGRAVLYVVEEPECPKGPDILVVLLSVMGAILLIGLATLLIWKLLITIHDRKEFAKFEEERARAKWDTANNPLYKEATSTFTNITYRGT</sequence>
<name>ITB3_MOUSE</name>
<protein>
    <recommendedName>
        <fullName evidence="17">Integrin beta-3</fullName>
    </recommendedName>
    <alternativeName>
        <fullName evidence="17">Platelet membrane glycoprotein IIIa</fullName>
        <shortName>GPIIIa</shortName>
    </alternativeName>
    <cdAntigenName>CD61</cdAntigenName>
</protein>
<reference key="1">
    <citation type="submission" date="1997-09" db="EMBL/GenBank/DDBJ databases">
        <authorList>
            <person name="McHugh K.P."/>
            <person name="Teitelbaum S.L."/>
            <person name="Kitazawa S."/>
            <person name="Ross F.P."/>
        </authorList>
    </citation>
    <scope>NUCLEOTIDE SEQUENCE [MRNA]</scope>
    <source>
        <strain>C3H/HeN</strain>
    </source>
</reference>
<reference key="2">
    <citation type="journal article" date="2005" name="Science">
        <title>The transcriptional landscape of the mammalian genome.</title>
        <authorList>
            <person name="Carninci P."/>
            <person name="Kasukawa T."/>
            <person name="Katayama S."/>
            <person name="Gough J."/>
            <person name="Frith M.C."/>
            <person name="Maeda N."/>
            <person name="Oyama R."/>
            <person name="Ravasi T."/>
            <person name="Lenhard B."/>
            <person name="Wells C."/>
            <person name="Kodzius R."/>
            <person name="Shimokawa K."/>
            <person name="Bajic V.B."/>
            <person name="Brenner S.E."/>
            <person name="Batalov S."/>
            <person name="Forrest A.R."/>
            <person name="Zavolan M."/>
            <person name="Davis M.J."/>
            <person name="Wilming L.G."/>
            <person name="Aidinis V."/>
            <person name="Allen J.E."/>
            <person name="Ambesi-Impiombato A."/>
            <person name="Apweiler R."/>
            <person name="Aturaliya R.N."/>
            <person name="Bailey T.L."/>
            <person name="Bansal M."/>
            <person name="Baxter L."/>
            <person name="Beisel K.W."/>
            <person name="Bersano T."/>
            <person name="Bono H."/>
            <person name="Chalk A.M."/>
            <person name="Chiu K.P."/>
            <person name="Choudhary V."/>
            <person name="Christoffels A."/>
            <person name="Clutterbuck D.R."/>
            <person name="Crowe M.L."/>
            <person name="Dalla E."/>
            <person name="Dalrymple B.P."/>
            <person name="de Bono B."/>
            <person name="Della Gatta G."/>
            <person name="di Bernardo D."/>
            <person name="Down T."/>
            <person name="Engstrom P."/>
            <person name="Fagiolini M."/>
            <person name="Faulkner G."/>
            <person name="Fletcher C.F."/>
            <person name="Fukushima T."/>
            <person name="Furuno M."/>
            <person name="Futaki S."/>
            <person name="Gariboldi M."/>
            <person name="Georgii-Hemming P."/>
            <person name="Gingeras T.R."/>
            <person name="Gojobori T."/>
            <person name="Green R.E."/>
            <person name="Gustincich S."/>
            <person name="Harbers M."/>
            <person name="Hayashi Y."/>
            <person name="Hensch T.K."/>
            <person name="Hirokawa N."/>
            <person name="Hill D."/>
            <person name="Huminiecki L."/>
            <person name="Iacono M."/>
            <person name="Ikeo K."/>
            <person name="Iwama A."/>
            <person name="Ishikawa T."/>
            <person name="Jakt M."/>
            <person name="Kanapin A."/>
            <person name="Katoh M."/>
            <person name="Kawasawa Y."/>
            <person name="Kelso J."/>
            <person name="Kitamura H."/>
            <person name="Kitano H."/>
            <person name="Kollias G."/>
            <person name="Krishnan S.P."/>
            <person name="Kruger A."/>
            <person name="Kummerfeld S.K."/>
            <person name="Kurochkin I.V."/>
            <person name="Lareau L.F."/>
            <person name="Lazarevic D."/>
            <person name="Lipovich L."/>
            <person name="Liu J."/>
            <person name="Liuni S."/>
            <person name="McWilliam S."/>
            <person name="Madan Babu M."/>
            <person name="Madera M."/>
            <person name="Marchionni L."/>
            <person name="Matsuda H."/>
            <person name="Matsuzawa S."/>
            <person name="Miki H."/>
            <person name="Mignone F."/>
            <person name="Miyake S."/>
            <person name="Morris K."/>
            <person name="Mottagui-Tabar S."/>
            <person name="Mulder N."/>
            <person name="Nakano N."/>
            <person name="Nakauchi H."/>
            <person name="Ng P."/>
            <person name="Nilsson R."/>
            <person name="Nishiguchi S."/>
            <person name="Nishikawa S."/>
            <person name="Nori F."/>
            <person name="Ohara O."/>
            <person name="Okazaki Y."/>
            <person name="Orlando V."/>
            <person name="Pang K.C."/>
            <person name="Pavan W.J."/>
            <person name="Pavesi G."/>
            <person name="Pesole G."/>
            <person name="Petrovsky N."/>
            <person name="Piazza S."/>
            <person name="Reed J."/>
            <person name="Reid J.F."/>
            <person name="Ring B.Z."/>
            <person name="Ringwald M."/>
            <person name="Rost B."/>
            <person name="Ruan Y."/>
            <person name="Salzberg S.L."/>
            <person name="Sandelin A."/>
            <person name="Schneider C."/>
            <person name="Schoenbach C."/>
            <person name="Sekiguchi K."/>
            <person name="Semple C.A."/>
            <person name="Seno S."/>
            <person name="Sessa L."/>
            <person name="Sheng Y."/>
            <person name="Shibata Y."/>
            <person name="Shimada H."/>
            <person name="Shimada K."/>
            <person name="Silva D."/>
            <person name="Sinclair B."/>
            <person name="Sperling S."/>
            <person name="Stupka E."/>
            <person name="Sugiura K."/>
            <person name="Sultana R."/>
            <person name="Takenaka Y."/>
            <person name="Taki K."/>
            <person name="Tammoja K."/>
            <person name="Tan S.L."/>
            <person name="Tang S."/>
            <person name="Taylor M.S."/>
            <person name="Tegner J."/>
            <person name="Teichmann S.A."/>
            <person name="Ueda H.R."/>
            <person name="van Nimwegen E."/>
            <person name="Verardo R."/>
            <person name="Wei C.L."/>
            <person name="Yagi K."/>
            <person name="Yamanishi H."/>
            <person name="Zabarovsky E."/>
            <person name="Zhu S."/>
            <person name="Zimmer A."/>
            <person name="Hide W."/>
            <person name="Bult C."/>
            <person name="Grimmond S.M."/>
            <person name="Teasdale R.D."/>
            <person name="Liu E.T."/>
            <person name="Brusic V."/>
            <person name="Quackenbush J."/>
            <person name="Wahlestedt C."/>
            <person name="Mattick J.S."/>
            <person name="Hume D.A."/>
            <person name="Kai C."/>
            <person name="Sasaki D."/>
            <person name="Tomaru Y."/>
            <person name="Fukuda S."/>
            <person name="Kanamori-Katayama M."/>
            <person name="Suzuki M."/>
            <person name="Aoki J."/>
            <person name="Arakawa T."/>
            <person name="Iida J."/>
            <person name="Imamura K."/>
            <person name="Itoh M."/>
            <person name="Kato T."/>
            <person name="Kawaji H."/>
            <person name="Kawagashira N."/>
            <person name="Kawashima T."/>
            <person name="Kojima M."/>
            <person name="Kondo S."/>
            <person name="Konno H."/>
            <person name="Nakano K."/>
            <person name="Ninomiya N."/>
            <person name="Nishio T."/>
            <person name="Okada M."/>
            <person name="Plessy C."/>
            <person name="Shibata K."/>
            <person name="Shiraki T."/>
            <person name="Suzuki S."/>
            <person name="Tagami M."/>
            <person name="Waki K."/>
            <person name="Watahiki A."/>
            <person name="Okamura-Oho Y."/>
            <person name="Suzuki H."/>
            <person name="Kawai J."/>
            <person name="Hayashizaki Y."/>
        </authorList>
    </citation>
    <scope>NUCLEOTIDE SEQUENCE [LARGE SCALE MRNA]</scope>
    <source>
        <strain>C57BL/6J</strain>
        <tissue>Inner ear</tissue>
    </source>
</reference>
<reference key="3">
    <citation type="journal article" date="2009" name="PLoS Biol.">
        <title>Lineage-specific biology revealed by a finished genome assembly of the mouse.</title>
        <authorList>
            <person name="Church D.M."/>
            <person name="Goodstadt L."/>
            <person name="Hillier L.W."/>
            <person name="Zody M.C."/>
            <person name="Goldstein S."/>
            <person name="She X."/>
            <person name="Bult C.J."/>
            <person name="Agarwala R."/>
            <person name="Cherry J.L."/>
            <person name="DiCuccio M."/>
            <person name="Hlavina W."/>
            <person name="Kapustin Y."/>
            <person name="Meric P."/>
            <person name="Maglott D."/>
            <person name="Birtle Z."/>
            <person name="Marques A.C."/>
            <person name="Graves T."/>
            <person name="Zhou S."/>
            <person name="Teague B."/>
            <person name="Potamousis K."/>
            <person name="Churas C."/>
            <person name="Place M."/>
            <person name="Herschleb J."/>
            <person name="Runnheim R."/>
            <person name="Forrest D."/>
            <person name="Amos-Landgraf J."/>
            <person name="Schwartz D.C."/>
            <person name="Cheng Z."/>
            <person name="Lindblad-Toh K."/>
            <person name="Eichler E.E."/>
            <person name="Ponting C.P."/>
        </authorList>
    </citation>
    <scope>NUCLEOTIDE SEQUENCE [LARGE SCALE GENOMIC DNA]</scope>
    <source>
        <strain>C57BL/6J</strain>
    </source>
</reference>
<reference key="4">
    <citation type="submission" date="2005-07" db="EMBL/GenBank/DDBJ databases">
        <authorList>
            <person name="Mural R.J."/>
            <person name="Adams M.D."/>
            <person name="Myers E.W."/>
            <person name="Smith H.O."/>
            <person name="Venter J.C."/>
        </authorList>
    </citation>
    <scope>NUCLEOTIDE SEQUENCE [LARGE SCALE GENOMIC DNA]</scope>
</reference>
<reference key="5">
    <citation type="journal article" date="2004" name="Genome Res.">
        <title>The status, quality, and expansion of the NIH full-length cDNA project: the Mammalian Gene Collection (MGC).</title>
        <authorList>
            <consortium name="The MGC Project Team"/>
        </authorList>
    </citation>
    <scope>NUCLEOTIDE SEQUENCE [LARGE SCALE MRNA]</scope>
    <source>
        <tissue>Brain</tissue>
    </source>
</reference>
<reference key="6">
    <citation type="journal article" date="2001" name="Nat. Immunol.">
        <title>gp49B1-alpha(v)beta3 interaction inhibits antigen-induced mast cell activation.</title>
        <authorList>
            <person name="Castells M.C."/>
            <person name="Klickstein L.B."/>
            <person name="Hassani K."/>
            <person name="Cumplido J.A."/>
            <person name="Lacouture M.E."/>
            <person name="Austen K.F."/>
            <person name="Katz H.R."/>
        </authorList>
    </citation>
    <scope>FUNCTION</scope>
</reference>
<reference key="7">
    <citation type="journal article" date="2002" name="Nature">
        <title>Fibulin-5/DANCE is essential for elastogenesis in vivo.</title>
        <authorList>
            <person name="Nakamura T."/>
            <person name="Lozano P.R."/>
            <person name="Ikeda Y."/>
            <person name="Iwanaga Y."/>
            <person name="Hinek A."/>
            <person name="Minamisawa S."/>
            <person name="Cheng C.F."/>
            <person name="Kobuke K."/>
            <person name="Dalton N."/>
            <person name="Takada Y."/>
            <person name="Tashiro K."/>
            <person name="Ross J."/>
            <person name="Honjo T."/>
            <person name="Chien K.R."/>
        </authorList>
    </citation>
    <scope>INTERACTION WITH FBLN5</scope>
</reference>
<reference key="8">
    <citation type="journal article" date="2003" name="Proc. Natl. Acad. Sci. U.S.A.">
        <title>Integrin beta cytoplasmic domain interactions with phosphotyrosine-binding domains: a structural prototype for diversity in integrin signaling.</title>
        <authorList>
            <person name="Calderwood D.A."/>
            <person name="Fujioka Y."/>
            <person name="de Pereda J.M."/>
            <person name="Garcia-Alvarez B."/>
            <person name="Nakamoto T."/>
            <person name="Margolis B."/>
            <person name="McGlade C.J."/>
            <person name="Liddington R.C."/>
            <person name="Ginsberg M.H."/>
        </authorList>
    </citation>
    <scope>INTERACTION WITH DAB2</scope>
</reference>
<reference key="9">
    <citation type="journal article" date="2008" name="Genes Dev.">
        <title>Kindlin-2 controls bidirectional signaling of integrins.</title>
        <authorList>
            <person name="Montanez E."/>
            <person name="Ussar S."/>
            <person name="Schifferer M."/>
            <person name="Bosl M."/>
            <person name="Zent R."/>
            <person name="Moser M."/>
            <person name="Fassler R."/>
        </authorList>
    </citation>
    <scope>INTERACTION WITH FERMT2</scope>
</reference>
<reference key="10">
    <citation type="journal article" date="2008" name="Neuron">
        <title>Activity-dependent regulation of synaptic AMPA receptor composition and abundance by beta3 integrins.</title>
        <authorList>
            <person name="Cingolani L.A."/>
            <person name="Thalhammer A."/>
            <person name="Yu L.M."/>
            <person name="Catalano M."/>
            <person name="Ramos T."/>
            <person name="Colicos M.A."/>
            <person name="Goda Y."/>
        </authorList>
    </citation>
    <scope>FUNCTION</scope>
    <scope>SUBCELLULAR LOCATION</scope>
    <scope>DISRUPTION PHENOTYPE</scope>
</reference>
<reference key="11">
    <citation type="journal article" date="2009" name="Blood">
        <title>Fibrinogen is required for maintenance of platelet intracellular and cell-surface P-selectin expression.</title>
        <authorList>
            <person name="Yang H."/>
            <person name="Lang S."/>
            <person name="Zhai Z."/>
            <person name="Li L."/>
            <person name="Kahr W.H."/>
            <person name="Chen P."/>
            <person name="Brkic J."/>
            <person name="Spring C.M."/>
            <person name="Flick M.J."/>
            <person name="Degen J.L."/>
            <person name="Freedman J."/>
            <person name="Ni H."/>
        </authorList>
    </citation>
    <scope>FUNCTION</scope>
</reference>
<reference key="12">
    <citation type="journal article" date="2010" name="Cell">
        <title>A tissue-specific atlas of mouse protein phosphorylation and expression.</title>
        <authorList>
            <person name="Huttlin E.L."/>
            <person name="Jedrychowski M.P."/>
            <person name="Elias J.E."/>
            <person name="Goswami T."/>
            <person name="Rad R."/>
            <person name="Beausoleil S.A."/>
            <person name="Villen J."/>
            <person name="Haas W."/>
            <person name="Sowa M.E."/>
            <person name="Gygi S.P."/>
        </authorList>
    </citation>
    <scope>PHOSPHORYLATION [LARGE SCALE ANALYSIS] AT THR-766</scope>
    <scope>IDENTIFICATION BY MASS SPECTROMETRY [LARGE SCALE ANALYSIS]</scope>
    <source>
        <tissue>Brown adipose tissue</tissue>
        <tissue>Kidney</tissue>
        <tissue>Liver</tissue>
        <tissue>Lung</tissue>
        <tissue>Spleen</tissue>
    </source>
</reference>
<reference key="13">
    <citation type="journal article" date="2012" name="J. Bone Miner. Res.">
        <title>DICAM inhibits osteoclast differentiation through attenuation of the integrin alphaVbeta3 pathway.</title>
        <authorList>
            <person name="Jung Y.K."/>
            <person name="Han S.W."/>
            <person name="Kim G.W."/>
            <person name="Jeong J.H."/>
            <person name="Kim H.J."/>
            <person name="Choi J.Y."/>
        </authorList>
    </citation>
    <scope>INTERACTION WITH MXRA8</scope>
</reference>
<reference key="14">
    <citation type="journal article" date="2014" name="J. Immunol.">
        <title>gp49B-mediated negative regulation of antibody production by memory and marginal zone B cells.</title>
        <authorList>
            <person name="Fukao S."/>
            <person name="Haniuda K."/>
            <person name="Nojima T."/>
            <person name="Takai T."/>
            <person name="Kitamura D."/>
        </authorList>
    </citation>
    <scope>FUNCTION</scope>
</reference>
<reference key="15">
    <citation type="journal article" date="2014" name="Thromb. Haemost.">
        <title>Cyclophilin A is an important mediator of platelet function by regulating integrin alphaIIbbeta3 bidirectional signalling.</title>
        <authorList>
            <person name="Wang L."/>
            <person name="Soe N.N."/>
            <person name="Sowden M."/>
            <person name="Xu Y."/>
            <person name="Modjeski K."/>
            <person name="Baskaran P."/>
            <person name="Kim Y."/>
            <person name="Smolock E.M."/>
            <person name="Morrell C.N."/>
            <person name="Berk B.C."/>
        </authorList>
    </citation>
    <scope>INTERACTION WITH PPIA</scope>
</reference>
<reference key="16">
    <citation type="journal article" date="2017" name="J. Neurosci.">
        <title>The Gain-of-Function Integrin beta3 Pro33 Variant Alters the Serotonin System in the Mouse Brain.</title>
        <authorList>
            <person name="Dohn M.R."/>
            <person name="Kooker C.G."/>
            <person name="Bastarache L."/>
            <person name="Jessen T."/>
            <person name="Rinaldi C."/>
            <person name="Varney S."/>
            <person name="Mazalouskas M.D."/>
            <person name="Pan H."/>
            <person name="Oliver K.H."/>
            <person name="Velez Edwards D.R."/>
            <person name="Sutcliffe J.S."/>
            <person name="Denny J.C."/>
            <person name="Carneiro A.M.D."/>
        </authorList>
    </citation>
    <scope>FUNCTION</scope>
    <scope>INTERACTION WITH SLC6A4</scope>
    <scope>SUBCELLULAR LOCATION</scope>
    <scope>MUTAGENESIS OF 58-GLN-GLY-59</scope>
</reference>
<reference key="17">
    <citation type="journal article" date="2022" name="J. Cell Biol.">
        <title>PEAK1 Y635 phosphorylation regulates cell migration through association with Tensin3 and integrins.</title>
        <authorList>
            <person name="Zuidema A."/>
            <person name="Atherton P."/>
            <person name="Kreft M."/>
            <person name="Hoekman L."/>
            <person name="Bleijerveld O.B."/>
            <person name="Nagaraj N."/>
            <person name="Chen N."/>
            <person name="Faessler R."/>
            <person name="Sonnenberg A."/>
        </authorList>
    </citation>
    <scope>INTERACTION WITH TNS3</scope>
</reference>
<reference key="18">
    <citation type="journal article" date="2024" name="Metabolism">
        <title>Tm4sf19 deficiency inhibits osteoclast multinucleation and prevents bone loss.</title>
        <authorList>
            <person name="Park S."/>
            <person name="Heo J.S."/>
            <person name="Mizuno S."/>
            <person name="Kim M."/>
            <person name="An H."/>
            <person name="Hong E."/>
            <person name="Kang M.G."/>
            <person name="Kim J."/>
            <person name="Yun R."/>
            <person name="Park H."/>
            <person name="Noh E.H."/>
            <person name="Lee M.J."/>
            <person name="Yoon K."/>
            <person name="Kim P."/>
            <person name="Son M."/>
            <person name="Pang K."/>
            <person name="Lee J."/>
            <person name="Park J."/>
            <person name="Ooshima A."/>
            <person name="Kim T.J."/>
            <person name="Park J.Y."/>
            <person name="Yang K.M."/>
            <person name="Myung S.J."/>
            <person name="Bae H."/>
            <person name="Lee K.M."/>
            <person name="Letterio J."/>
            <person name="Park S.H."/>
            <person name="Takahashi S."/>
            <person name="Kim S.J."/>
        </authorList>
    </citation>
    <scope>INTERACTION WITH TM4SF19</scope>
</reference>
<gene>
    <name evidence="18" type="primary">Itgb3</name>
</gene>
<evidence type="ECO:0000250" key="1">
    <source>
        <dbReference type="UniProtKB" id="P05106"/>
    </source>
</evidence>
<evidence type="ECO:0000250" key="2">
    <source>
        <dbReference type="UniProtKB" id="Q8R2H2"/>
    </source>
</evidence>
<evidence type="ECO:0000255" key="3"/>
<evidence type="ECO:0000255" key="4">
    <source>
        <dbReference type="PROSITE-ProRule" id="PRU01392"/>
    </source>
</evidence>
<evidence type="ECO:0000269" key="5">
    <source>
    </source>
</evidence>
<evidence type="ECO:0000269" key="6">
    <source>
    </source>
</evidence>
<evidence type="ECO:0000269" key="7">
    <source>
    </source>
</evidence>
<evidence type="ECO:0000269" key="8">
    <source>
    </source>
</evidence>
<evidence type="ECO:0000269" key="9">
    <source>
    </source>
</evidence>
<evidence type="ECO:0000269" key="10">
    <source>
    </source>
</evidence>
<evidence type="ECO:0000269" key="11">
    <source>
    </source>
</evidence>
<evidence type="ECO:0000269" key="12">
    <source>
    </source>
</evidence>
<evidence type="ECO:0000269" key="13">
    <source>
    </source>
</evidence>
<evidence type="ECO:0000269" key="14">
    <source>
    </source>
</evidence>
<evidence type="ECO:0000269" key="15">
    <source>
    </source>
</evidence>
<evidence type="ECO:0000269" key="16">
    <source>
    </source>
</evidence>
<evidence type="ECO:0000305" key="17"/>
<evidence type="ECO:0000312" key="18">
    <source>
        <dbReference type="MGI" id="MGI:96612"/>
    </source>
</evidence>
<evidence type="ECO:0007744" key="19">
    <source>
    </source>
</evidence>
<evidence type="ECO:0007829" key="20">
    <source>
        <dbReference type="PDB" id="5XQ1"/>
    </source>
</evidence>
<accession>O54890</accession>
<accession>Q3TZC6</accession>
<comment type="function">
    <text evidence="1 5 9 10 13 14">Integrin alpha-V/beta-3 (ITGAV:ITGB3) is a receptor for cytotactin, fibronectin, laminin, matrix metalloproteinase-2, osteopontin, osteomodulin, prothrombin, thrombospondin, vitronectin and von Willebrand factor. Integrin alpha-IIB/beta-3 (ITGA2B:ITGB3) is a receptor for fibronectin, fibrinogen, plasminogen, prothrombin, thrombospondin and vitronectin. Integrins alpha-IIB/beta-3 and alpha-V/beta-3 recognize the sequence R-G-D in a wide array of ligands. Integrin alpha-IIB/beta-3 recognizes the sequence H-H-L-G-G-G-A-K-Q-A-G-D-V in fibrinogen gamma chain. Following activation integrin alpha-IIB/beta-3 brings about platelet/platelet interaction through binding of soluble fibrinogen. This step leads to rapid platelet aggregation which physically plugs ruptured endothelial surfaces. Fibrinogen binding enhances SELP expression in activated platelets (PubMed:19332769). ITGAV:ITGB3 binds to fractalkine (CX3CL1) and acts as its coreceptor in CX3CR1-dependent fractalkine signaling. ITGAV:ITGB3 binds to NRG1 (via EGF domain) and this binding is essential for NRG1-ERBB signaling. ITGAV:ITGB3 binds to FGF1 and this binding is essential for FGF1 signaling. ITGAV:ITGB3 binds to FGF2 and this binding is essential for FGF2 signaling (By similarity). ITGAV:ITGB3 binds to IGF1 and this binding is essential for IGF1 signaling (By similarity). ITGAV:ITGB3 binds to IGF2 and this binding is essential for IGF2 signaling (By similarity). ITGAV:ITGB3 binds to IL1B and this binding is essential for IL1B signaling (By similarity). ITGAV:ITGB3 binds to PLA2G2A via a site (site 2) which is distinct from the classical ligand-binding site (site 1) and this induces integrin conformational changes and enhanced ligand binding to site 1 (By similarity). ITGAV:ITGB3 acts as a receptor for fibrillin-1 (FBN1) and mediates R-G-D-dependent cell adhesion to FBN1 (By similarity). ITGAV:ITGB3 binds to the Lilrb4a/Gp49b receptor and enhances the Lilrb4a-mediated inhibition of mast cell activation (PubMed:11323698). ITGAV:ITGB3 also suppresses marginal zone B cell antibody production through its interaction with Lilrb4a (PubMed:24935931). In brain, plays a role in synaptic transmission and plasticity (PubMed:18549786, PubMed:29038237). Involved in the regulation of the serotonin neurotransmission, is required to localize to specific compartments within the synapse the serotonin receptor SLC6A4 and for an appropriate reuptake of serotonin (PubMed:29038237). Controls excitatory synaptic strength by regulating GRIA2-containing AMPAR endocytosis, which affects AMPAR abundance and composition (PubMed:18549786). ITGAV:ITGB3 act as a receptor for CD40LG (By similarity). ITGAV:ITGB3 acts as a receptor for IBSP and promotes cell adhesion and migration to IBSP (By similarity).</text>
</comment>
<comment type="subunit">
    <text evidence="1 2 6 7 8 11 12 14 15 16">Heterodimer of an alpha and a beta subunit (By similarity). Beta-3 (ITGB3) associates with either alpha-IIB (ITGA2B) or alpha-V (ITGAV). Interacts with FLNB and COMP (By similarity). Interacts with PDIA6 following platelet stimulation (By similarity). Interacts with SYK; upon activation by ITGB3 promotes platelet adhesion (By similarity). Interacts with MYO10 (By similarity). Interacts with DAB2 (PubMed:12606711). Interacts with FERMT2 (PubMed:18483218). Integrin ITGAV:ITGB3 interacts with FBLN5 (via N-terminus) (PubMed:11805835). Interacts with EMP2; regulates the levels of the heterodimer ITGA5:ITGB3 integrin expression on the plasma membrane (By similarity). ITGAV:ITGB3 interacts with CCN3 (By similarity). ITGAV:ITGB3 and ITGA2B:ITGB3 interact with SELP (via C-type lectin domain); the interaction mediates cell-cell interaction and adhesion (By similarity). ITGAV:ITGB3 interacts with AGRA2 (By similarity). ITGAV:ITGB3 is found in a ternary complex with CX3CR1 and CX3CL1. ITGAV:ITGB3 is found in a ternary complex with NRG1 and ERBB3. ITGAV:ITGB3 is found in a ternary complex with FGF1 and FGFR1. ITGAV:ITGB3 interacts with FGF2; it is likely that FGF2 can simultaneously bind ITGAV:ITGB3 and FGF receptors (By similarity). ITGAV:ITGB3 binds to IL1B (By similarity). ITGAV:ITGB3 is found in a ternary complex with IGF1 and IGF1R (By similarity). ITGAV:ITGB3 interacts with IGF2 (By similarity). ITGAV:ITGB3 interacts with FBN1 (By similarity). ITGAV:ITGB3 interacts with CD9, CD81 and CD151 (via second extracellular domain) (By similarity). Interacts (via the allosteric site (site 2)) with CXCL12 in a CXCR4-independent manner (By similarity). Interacts with MXRA8/DICAM; the interaction inhibits ITGAV:ITGB3 heterodimer formation (PubMed:22492581). ITGAV:ITGB3 interacts with PTN. Forms a complex with PTPRZ1 and PTN that stimulates endothelial cell migration through ITGB3 Tyr-772 phosphorylation (By similarity). ITGAV:ITGB3 interacts with SLC6A4. Interacts with SLC6A4 (via C-terminus); this interaction regulates SLC6A4 trafficking (By similarity) (PubMed:29038237). ITGA2B:ITGB3 interacts with PPIA/CYPA; the interaction is ROS and PPIase activity-dependent and is increased in the presence of thrombin (PubMed:24429998). Interacts with tensin TNS3; TNS3 also interacts with PEAK1, thus acting as an adapter molecule to bridge the association of PEAK1 with ITGB3 (PubMed:35687021). Interacts with TM4SF19 (PubMed:38016540).</text>
</comment>
<comment type="subcellular location">
    <subcellularLocation>
        <location evidence="1">Cell membrane</location>
        <topology evidence="1">Single-pass type I membrane protein</topology>
    </subcellularLocation>
    <subcellularLocation>
        <location evidence="1">Cell projection</location>
        <location evidence="1">Lamellipodium membrane</location>
    </subcellularLocation>
    <subcellularLocation>
        <location evidence="14">Cell junction</location>
        <location evidence="14">Focal adhesion</location>
    </subcellularLocation>
    <subcellularLocation>
        <location evidence="9">Postsynaptic cell membrane</location>
        <topology evidence="17">Single-pass type I membrane protein</topology>
    </subcellularLocation>
    <subcellularLocation>
        <location evidence="14">Synapse</location>
    </subcellularLocation>
</comment>
<comment type="domain">
    <text evidence="1">The VWFA domain (or beta I domain) contains three cation-binding sites: the ligand-associated metal ion-binding site (LIMBS or SyMBS), the metal ion-dependent adhesion site (MIDAS), and the adjacent MIDAS site (ADMIDAS). This domain is also part of the ligand-binding site.</text>
</comment>
<comment type="PTM">
    <text evidence="1">Phosphorylated on tyrosine residues in response to thrombin-induced platelet aggregation. Probably involved in outside-in signaling.</text>
</comment>
<comment type="disruption phenotype">
    <text evidence="9">Animals are viable and fertile.</text>
</comment>
<comment type="similarity">
    <text evidence="17">Belongs to the integrin beta chain family.</text>
</comment>
<organism>
    <name type="scientific">Mus musculus</name>
    <name type="common">Mouse</name>
    <dbReference type="NCBI Taxonomy" id="10090"/>
    <lineage>
        <taxon>Eukaryota</taxon>
        <taxon>Metazoa</taxon>
        <taxon>Chordata</taxon>
        <taxon>Craniata</taxon>
        <taxon>Vertebrata</taxon>
        <taxon>Euteleostomi</taxon>
        <taxon>Mammalia</taxon>
        <taxon>Eutheria</taxon>
        <taxon>Euarchontoglires</taxon>
        <taxon>Glires</taxon>
        <taxon>Rodentia</taxon>
        <taxon>Myomorpha</taxon>
        <taxon>Muroidea</taxon>
        <taxon>Muridae</taxon>
        <taxon>Murinae</taxon>
        <taxon>Mus</taxon>
        <taxon>Mus</taxon>
    </lineage>
</organism>